<comment type="function">
    <text evidence="1 4">Probable neurotoxin with ion channel inhibitor activity (Probable). In vivo, elicits dose-dependently excitatory activity upon injection into fish. Its action is slowly reversible (By similarity).</text>
</comment>
<comment type="subcellular location">
    <subcellularLocation>
        <location evidence="2">Secreted</location>
    </subcellularLocation>
</comment>
<comment type="tissue specificity">
    <text evidence="5">Expressed by the venom duct.</text>
</comment>
<comment type="domain">
    <text evidence="4">The cysteine framework is IV (CC-C-C-C-C).</text>
</comment>
<comment type="similarity">
    <text evidence="4">Belongs to the conotoxin A superfamily.</text>
</comment>
<evidence type="ECO:0000250" key="1">
    <source>
        <dbReference type="UniProtKB" id="P0C2C5"/>
    </source>
</evidence>
<evidence type="ECO:0000269" key="2">
    <source>
    </source>
</evidence>
<evidence type="ECO:0000303" key="3">
    <source>
    </source>
</evidence>
<evidence type="ECO:0000305" key="4"/>
<evidence type="ECO:0000305" key="5">
    <source>
    </source>
</evidence>
<proteinExistence type="evidence at protein level"/>
<sequence length="24" mass="2602">DCCGVKLEMCHPCLCDNSCKKSGK</sequence>
<protein>
    <recommendedName>
        <fullName evidence="3">Conotoxin PIVF</fullName>
    </recommendedName>
    <alternativeName>
        <fullName evidence="3">Kappa-conotoxin-like PIVF</fullName>
        <shortName evidence="3">KappaA-PIVF</shortName>
    </alternativeName>
</protein>
<feature type="peptide" id="PRO_0000273428" description="Conotoxin PIVF" evidence="2">
    <location>
        <begin position="1"/>
        <end position="24"/>
    </location>
</feature>
<feature type="modified residue" description="Lysine amide" evidence="2">
    <location>
        <position position="24"/>
    </location>
</feature>
<feature type="disulfide bond" evidence="1">
    <location>
        <begin position="2"/>
        <end position="10"/>
    </location>
</feature>
<feature type="disulfide bond" evidence="1">
    <location>
        <begin position="3"/>
        <end position="15"/>
    </location>
</feature>
<feature type="disulfide bond" evidence="1">
    <location>
        <begin position="13"/>
        <end position="19"/>
    </location>
</feature>
<name>CA4F_CONPU</name>
<reference key="1">
    <citation type="journal article" date="2007" name="Toxicon">
        <title>Discovery and characterization of the short kappaA-conotoxins: a novel subfamily of excitatory conotoxins.</title>
        <authorList>
            <person name="Teichert R.W."/>
            <person name="Jacobsen R."/>
            <person name="Terlau H."/>
            <person name="Yoshikami D."/>
            <person name="Olivera B.M."/>
        </authorList>
    </citation>
    <scope>PROTEIN SEQUENCE</scope>
    <scope>AMIDATION AT LYS-24</scope>
    <scope>SUBCELLULAR LOCATION</scope>
    <source>
        <tissue>Venom</tissue>
    </source>
</reference>
<dbReference type="ConoServer" id="1669">
    <property type="toxin name" value="PIVF"/>
</dbReference>
<dbReference type="GO" id="GO:0005576">
    <property type="term" value="C:extracellular region"/>
    <property type="evidence" value="ECO:0007669"/>
    <property type="project" value="UniProtKB-SubCell"/>
</dbReference>
<dbReference type="GO" id="GO:0099106">
    <property type="term" value="F:ion channel regulator activity"/>
    <property type="evidence" value="ECO:0007669"/>
    <property type="project" value="UniProtKB-KW"/>
</dbReference>
<dbReference type="GO" id="GO:0090729">
    <property type="term" value="F:toxin activity"/>
    <property type="evidence" value="ECO:0007669"/>
    <property type="project" value="UniProtKB-KW"/>
</dbReference>
<keyword id="KW-0027">Amidation</keyword>
<keyword id="KW-0903">Direct protein sequencing</keyword>
<keyword id="KW-1015">Disulfide bond</keyword>
<keyword id="KW-0872">Ion channel impairing toxin</keyword>
<keyword id="KW-0528">Neurotoxin</keyword>
<keyword id="KW-0964">Secreted</keyword>
<keyword id="KW-0800">Toxin</keyword>
<accession>P0C2C6</accession>
<organism>
    <name type="scientific">Conus purpurascens</name>
    <name type="common">Purple cone</name>
    <dbReference type="NCBI Taxonomy" id="41690"/>
    <lineage>
        <taxon>Eukaryota</taxon>
        <taxon>Metazoa</taxon>
        <taxon>Spiralia</taxon>
        <taxon>Lophotrochozoa</taxon>
        <taxon>Mollusca</taxon>
        <taxon>Gastropoda</taxon>
        <taxon>Caenogastropoda</taxon>
        <taxon>Neogastropoda</taxon>
        <taxon>Conoidea</taxon>
        <taxon>Conidae</taxon>
        <taxon>Conus</taxon>
        <taxon>Chelyconus</taxon>
    </lineage>
</organism>